<keyword id="KW-0002">3D-structure</keyword>
<keyword id="KW-0044">Antibiotic</keyword>
<keyword id="KW-0929">Antimicrobial</keyword>
<keyword id="KW-0968">Cytoplasmic vesicle</keyword>
<keyword id="KW-0211">Defensin</keyword>
<keyword id="KW-0903">Direct protein sequencing</keyword>
<keyword id="KW-1015">Disulfide bond</keyword>
<keyword id="KW-0295">Fungicide</keyword>
<keyword id="KW-0325">Glycoprotein</keyword>
<keyword id="KW-0391">Immunity</keyword>
<keyword id="KW-0399">Innate immunity</keyword>
<keyword id="KW-1267">Proteomics identification</keyword>
<keyword id="KW-1185">Reference proteome</keyword>
<keyword id="KW-0964">Secreted</keyword>
<keyword id="KW-0732">Signal</keyword>
<protein>
    <recommendedName>
        <fullName evidence="20">Defensin alpha 5</fullName>
    </recommendedName>
    <alternativeName>
        <fullName evidence="18">Defensin-5</fullName>
    </alternativeName>
    <alternativeName>
        <fullName evidence="17">HD5(20-94)</fullName>
    </alternativeName>
    <component>
        <recommendedName>
            <fullName evidence="17">HD5(23-94)</fullName>
        </recommendedName>
    </component>
    <component>
        <recommendedName>
            <fullName evidence="17">HD5(29-94)</fullName>
        </recommendedName>
    </component>
    <component>
        <recommendedName>
            <fullName evidence="17">HD5(56-94)</fullName>
        </recommendedName>
    </component>
    <component>
        <recommendedName>
            <fullName evidence="17">HD5(63-94)</fullName>
        </recommendedName>
    </component>
</protein>
<dbReference type="EMBL" id="M97925">
    <property type="protein sequence ID" value="AAA35754.1"/>
    <property type="molecule type" value="Genomic_DNA"/>
</dbReference>
<dbReference type="EMBL" id="AF238378">
    <property type="protein sequence ID" value="AAT68886.1"/>
    <property type="molecule type" value="Genomic_DNA"/>
</dbReference>
<dbReference type="EMBL" id="CH471153">
    <property type="protein sequence ID" value="EAW80489.1"/>
    <property type="molecule type" value="Genomic_DNA"/>
</dbReference>
<dbReference type="EMBL" id="BC069690">
    <property type="protein sequence ID" value="AAH69690.1"/>
    <property type="molecule type" value="mRNA"/>
</dbReference>
<dbReference type="EMBL" id="BC107079">
    <property type="protein sequence ID" value="AAI07080.1"/>
    <property type="molecule type" value="mRNA"/>
</dbReference>
<dbReference type="CCDS" id="CCDS5963.1"/>
<dbReference type="PIR" id="A44454">
    <property type="entry name" value="A44454"/>
</dbReference>
<dbReference type="RefSeq" id="NP_066290.1">
    <property type="nucleotide sequence ID" value="NM_021010.3"/>
</dbReference>
<dbReference type="PDB" id="1ZMP">
    <property type="method" value="X-ray"/>
    <property type="resolution" value="1.65 A"/>
    <property type="chains" value="A/B/C/D=63-94"/>
</dbReference>
<dbReference type="PDB" id="2LXZ">
    <property type="method" value="NMR"/>
    <property type="chains" value="A=63-94"/>
</dbReference>
<dbReference type="PDB" id="2MIT">
    <property type="method" value="NMR"/>
    <property type="chains" value="A/B=63-94"/>
</dbReference>
<dbReference type="PDB" id="3I5W">
    <property type="method" value="X-ray"/>
    <property type="resolution" value="1.63 A"/>
    <property type="chains" value="A/B=63-94"/>
</dbReference>
<dbReference type="PDB" id="4E82">
    <property type="method" value="X-ray"/>
    <property type="resolution" value="1.70 A"/>
    <property type="chains" value="A/B=63-94"/>
</dbReference>
<dbReference type="PDB" id="4E83">
    <property type="method" value="X-ray"/>
    <property type="resolution" value="1.90 A"/>
    <property type="chains" value="A/B=63-94"/>
</dbReference>
<dbReference type="PDB" id="4E86">
    <property type="method" value="X-ray"/>
    <property type="resolution" value="2.75 A"/>
    <property type="chains" value="A/B/C/D/E/F/G/H/L=63-94"/>
</dbReference>
<dbReference type="PDB" id="4RBW">
    <property type="method" value="X-ray"/>
    <property type="resolution" value="1.50 A"/>
    <property type="chains" value="A/B/C/D=63-94"/>
</dbReference>
<dbReference type="PDB" id="4RBX">
    <property type="method" value="X-ray"/>
    <property type="resolution" value="1.10 A"/>
    <property type="chains" value="A=63-94"/>
</dbReference>
<dbReference type="PDB" id="5CUI">
    <property type="method" value="X-ray"/>
    <property type="resolution" value="2.40 A"/>
    <property type="chains" value="A/B/C/D/E/F=63-94"/>
</dbReference>
<dbReference type="PDB" id="5CUJ">
    <property type="method" value="X-ray"/>
    <property type="resolution" value="2.08 A"/>
    <property type="chains" value="A/B/C/D/E/F=63-94"/>
</dbReference>
<dbReference type="PDB" id="5CUM">
    <property type="method" value="X-ray"/>
    <property type="resolution" value="1.75 A"/>
    <property type="chains" value="A/B/C=63-94"/>
</dbReference>
<dbReference type="PDBsum" id="1ZMP"/>
<dbReference type="PDBsum" id="2LXZ"/>
<dbReference type="PDBsum" id="2MIT"/>
<dbReference type="PDBsum" id="3I5W"/>
<dbReference type="PDBsum" id="4E82"/>
<dbReference type="PDBsum" id="4E83"/>
<dbReference type="PDBsum" id="4E86"/>
<dbReference type="PDBsum" id="4RBW"/>
<dbReference type="PDBsum" id="4RBX"/>
<dbReference type="PDBsum" id="5CUI"/>
<dbReference type="PDBsum" id="5CUJ"/>
<dbReference type="PDBsum" id="5CUM"/>
<dbReference type="BMRB" id="Q01523"/>
<dbReference type="SMR" id="Q01523"/>
<dbReference type="BioGRID" id="108034">
    <property type="interactions" value="119"/>
</dbReference>
<dbReference type="FunCoup" id="Q01523">
    <property type="interactions" value="272"/>
</dbReference>
<dbReference type="IntAct" id="Q01523">
    <property type="interactions" value="69"/>
</dbReference>
<dbReference type="STRING" id="9606.ENSP00000329890"/>
<dbReference type="BioMuta" id="DEFA5"/>
<dbReference type="DMDM" id="399353"/>
<dbReference type="MassIVE" id="Q01523"/>
<dbReference type="PaxDb" id="9606-ENSP00000329890"/>
<dbReference type="PeptideAtlas" id="Q01523"/>
<dbReference type="ProteomicsDB" id="57964"/>
<dbReference type="Antibodypedia" id="1967">
    <property type="antibodies" value="257 antibodies from 23 providers"/>
</dbReference>
<dbReference type="DNASU" id="1670"/>
<dbReference type="Ensembl" id="ENST00000330590.4">
    <property type="protein sequence ID" value="ENSP00000329890.2"/>
    <property type="gene ID" value="ENSG00000164816.8"/>
</dbReference>
<dbReference type="Ensembl" id="ENST00000647159.2">
    <property type="protein sequence ID" value="ENSP00000494799.1"/>
    <property type="gene ID" value="ENSG00000285251.2"/>
</dbReference>
<dbReference type="GeneID" id="1670"/>
<dbReference type="KEGG" id="hsa:1670"/>
<dbReference type="MANE-Select" id="ENST00000330590.4">
    <property type="protein sequence ID" value="ENSP00000329890.2"/>
    <property type="RefSeq nucleotide sequence ID" value="NM_021010.3"/>
    <property type="RefSeq protein sequence ID" value="NP_066290.1"/>
</dbReference>
<dbReference type="UCSC" id="uc003wra.2">
    <property type="organism name" value="human"/>
</dbReference>
<dbReference type="AGR" id="HGNC:2764"/>
<dbReference type="CTD" id="1670"/>
<dbReference type="DisGeNET" id="1670"/>
<dbReference type="GeneCards" id="DEFA5"/>
<dbReference type="HGNC" id="HGNC:2764">
    <property type="gene designation" value="DEFA5"/>
</dbReference>
<dbReference type="HPA" id="ENSG00000164816">
    <property type="expression patterns" value="Tissue enriched (intestine)"/>
</dbReference>
<dbReference type="MIM" id="600472">
    <property type="type" value="gene"/>
</dbReference>
<dbReference type="neXtProt" id="NX_Q01523"/>
<dbReference type="OpenTargets" id="ENSG00000164816"/>
<dbReference type="PharmGKB" id="PA27241"/>
<dbReference type="VEuPathDB" id="HostDB:ENSG00000164816"/>
<dbReference type="eggNOG" id="ENOG502T2EX">
    <property type="taxonomic scope" value="Eukaryota"/>
</dbReference>
<dbReference type="GeneTree" id="ENSGT00940000153268"/>
<dbReference type="HOGENOM" id="CLU_160803_3_0_1"/>
<dbReference type="InParanoid" id="Q01523"/>
<dbReference type="OMA" id="ATCYCRT"/>
<dbReference type="OrthoDB" id="9837636at2759"/>
<dbReference type="PAN-GO" id="Q01523">
    <property type="GO annotations" value="8 GO annotations based on evolutionary models"/>
</dbReference>
<dbReference type="PhylomeDB" id="Q01523"/>
<dbReference type="TreeFam" id="TF338414"/>
<dbReference type="PathwayCommons" id="Q01523"/>
<dbReference type="Reactome" id="R-HSA-1461973">
    <property type="pathway name" value="Defensins"/>
</dbReference>
<dbReference type="Reactome" id="R-HSA-1462054">
    <property type="pathway name" value="Alpha-defensins"/>
</dbReference>
<dbReference type="Reactome" id="R-HSA-9841251">
    <property type="pathway name" value="Mitochondrial unfolded protein response (UPRmt)"/>
</dbReference>
<dbReference type="SignaLink" id="Q01523"/>
<dbReference type="BioGRID-ORCS" id="1670">
    <property type="hits" value="10 hits in 1138 CRISPR screens"/>
</dbReference>
<dbReference type="ChiTaRS" id="DEFA5">
    <property type="organism name" value="human"/>
</dbReference>
<dbReference type="EvolutionaryTrace" id="Q01523"/>
<dbReference type="GeneWiki" id="DEFA5"/>
<dbReference type="GenomeRNAi" id="1670"/>
<dbReference type="Pharos" id="Q01523">
    <property type="development level" value="Tbio"/>
</dbReference>
<dbReference type="PRO" id="PR:Q01523"/>
<dbReference type="Proteomes" id="UP000005640">
    <property type="component" value="Chromosome 8"/>
</dbReference>
<dbReference type="RNAct" id="Q01523">
    <property type="molecule type" value="protein"/>
</dbReference>
<dbReference type="Bgee" id="ENSG00000164816">
    <property type="expression patterns" value="Expressed in duodenum and 74 other cell types or tissues"/>
</dbReference>
<dbReference type="GO" id="GO:0005576">
    <property type="term" value="C:extracellular region"/>
    <property type="evidence" value="ECO:0000304"/>
    <property type="project" value="Reactome"/>
</dbReference>
<dbReference type="GO" id="GO:0005615">
    <property type="term" value="C:extracellular space"/>
    <property type="evidence" value="ECO:0000314"/>
    <property type="project" value="UniProtKB"/>
</dbReference>
<dbReference type="GO" id="GO:0005796">
    <property type="term" value="C:Golgi lumen"/>
    <property type="evidence" value="ECO:0000304"/>
    <property type="project" value="Reactome"/>
</dbReference>
<dbReference type="GO" id="GO:0043231">
    <property type="term" value="C:intracellular membrane-bounded organelle"/>
    <property type="evidence" value="ECO:0000314"/>
    <property type="project" value="HPA"/>
</dbReference>
<dbReference type="GO" id="GO:0030496">
    <property type="term" value="C:midbody"/>
    <property type="evidence" value="ECO:0000314"/>
    <property type="project" value="HPA"/>
</dbReference>
<dbReference type="GO" id="GO:0030141">
    <property type="term" value="C:secretory granule"/>
    <property type="evidence" value="ECO:0000314"/>
    <property type="project" value="UniProtKB"/>
</dbReference>
<dbReference type="GO" id="GO:0034774">
    <property type="term" value="C:secretory granule lumen"/>
    <property type="evidence" value="ECO:0000304"/>
    <property type="project" value="Reactome"/>
</dbReference>
<dbReference type="GO" id="GO:0030133">
    <property type="term" value="C:transport vesicle"/>
    <property type="evidence" value="ECO:0007669"/>
    <property type="project" value="UniProtKB-SubCell"/>
</dbReference>
<dbReference type="GO" id="GO:0042803">
    <property type="term" value="F:protein homodimerization activity"/>
    <property type="evidence" value="ECO:0000314"/>
    <property type="project" value="UniProtKB"/>
</dbReference>
<dbReference type="GO" id="GO:0019731">
    <property type="term" value="P:antibacterial humoral response"/>
    <property type="evidence" value="ECO:0000318"/>
    <property type="project" value="GO_Central"/>
</dbReference>
<dbReference type="GO" id="GO:0061844">
    <property type="term" value="P:antimicrobial humoral immune response mediated by antimicrobial peptide"/>
    <property type="evidence" value="ECO:0000314"/>
    <property type="project" value="UniProtKB"/>
</dbReference>
<dbReference type="GO" id="GO:0071222">
    <property type="term" value="P:cellular response to lipopolysaccharide"/>
    <property type="evidence" value="ECO:0000318"/>
    <property type="project" value="GO_Central"/>
</dbReference>
<dbReference type="GO" id="GO:0050832">
    <property type="term" value="P:defense response to fungus"/>
    <property type="evidence" value="ECO:0007669"/>
    <property type="project" value="UniProtKB-KW"/>
</dbReference>
<dbReference type="GO" id="GO:0050829">
    <property type="term" value="P:defense response to Gram-negative bacterium"/>
    <property type="evidence" value="ECO:0000314"/>
    <property type="project" value="UniProtKB"/>
</dbReference>
<dbReference type="GO" id="GO:0050830">
    <property type="term" value="P:defense response to Gram-positive bacterium"/>
    <property type="evidence" value="ECO:0000314"/>
    <property type="project" value="UniProtKB"/>
</dbReference>
<dbReference type="GO" id="GO:0051673">
    <property type="term" value="P:disruption of plasma membrane integrity in another organism"/>
    <property type="evidence" value="ECO:0000318"/>
    <property type="project" value="GO_Central"/>
</dbReference>
<dbReference type="GO" id="GO:0045087">
    <property type="term" value="P:innate immune response"/>
    <property type="evidence" value="ECO:0000315"/>
    <property type="project" value="UniProtKB"/>
</dbReference>
<dbReference type="GO" id="GO:0002227">
    <property type="term" value="P:innate immune response in mucosa"/>
    <property type="evidence" value="ECO:0000318"/>
    <property type="project" value="GO_Central"/>
</dbReference>
<dbReference type="GO" id="GO:0051873">
    <property type="term" value="P:killing by host of symbiont cells"/>
    <property type="evidence" value="ECO:0000314"/>
    <property type="project" value="CACAO"/>
</dbReference>
<dbReference type="GO" id="GO:0031640">
    <property type="term" value="P:killing of cells of another organism"/>
    <property type="evidence" value="ECO:0000314"/>
    <property type="project" value="UniProtKB"/>
</dbReference>
<dbReference type="GO" id="GO:0032757">
    <property type="term" value="P:positive regulation of interleukin-8 production"/>
    <property type="evidence" value="ECO:0000314"/>
    <property type="project" value="UniProtKB"/>
</dbReference>
<dbReference type="GO" id="GO:1905710">
    <property type="term" value="P:positive regulation of membrane permeability"/>
    <property type="evidence" value="ECO:0000315"/>
    <property type="project" value="UniProtKB"/>
</dbReference>
<dbReference type="GO" id="GO:0051289">
    <property type="term" value="P:protein homotetramerization"/>
    <property type="evidence" value="ECO:0000314"/>
    <property type="project" value="UniProtKB"/>
</dbReference>
<dbReference type="InterPro" id="IPR016327">
    <property type="entry name" value="Alpha-defensin"/>
</dbReference>
<dbReference type="InterPro" id="IPR006081">
    <property type="entry name" value="Alpha-defensin_C"/>
</dbReference>
<dbReference type="InterPro" id="IPR002366">
    <property type="entry name" value="Alpha-defensin_N"/>
</dbReference>
<dbReference type="InterPro" id="IPR006080">
    <property type="entry name" value="Beta/alpha-defensin_C"/>
</dbReference>
<dbReference type="PANTHER" id="PTHR11876">
    <property type="entry name" value="ALPHA-DEFENSIN 1"/>
    <property type="match status" value="1"/>
</dbReference>
<dbReference type="PANTHER" id="PTHR11876:SF6">
    <property type="entry name" value="DEFENSIN ALPHA 5"/>
    <property type="match status" value="1"/>
</dbReference>
<dbReference type="Pfam" id="PF00323">
    <property type="entry name" value="Defensin_1"/>
    <property type="match status" value="1"/>
</dbReference>
<dbReference type="Pfam" id="PF00879">
    <property type="entry name" value="Defensin_propep"/>
    <property type="match status" value="1"/>
</dbReference>
<dbReference type="PIRSF" id="PIRSF001875">
    <property type="entry name" value="Alpha-defensin"/>
    <property type="match status" value="1"/>
</dbReference>
<dbReference type="SMART" id="SM01418">
    <property type="entry name" value="Defensin_propep"/>
    <property type="match status" value="1"/>
</dbReference>
<dbReference type="SMART" id="SM00048">
    <property type="entry name" value="DEFSN"/>
    <property type="match status" value="1"/>
</dbReference>
<dbReference type="SUPFAM" id="SSF57392">
    <property type="entry name" value="Defensin-like"/>
    <property type="match status" value="1"/>
</dbReference>
<dbReference type="PROSITE" id="PS00269">
    <property type="entry name" value="DEFENSIN"/>
    <property type="match status" value="1"/>
</dbReference>
<sequence>MRTIAILAAILLVALQAQAESLQERADEATTQKQSGEDNQDLAISFAGNGLSALRTSGSQARATCYCRTGRCATRESLSGVCEISGRLYRLCCR</sequence>
<gene>
    <name type="primary">DEFA5</name>
    <name type="synonym">DEF5</name>
</gene>
<feature type="signal peptide" evidence="1">
    <location>
        <begin position="1"/>
        <end position="19"/>
    </location>
</feature>
<feature type="peptide" id="PRO_0000006787" description="Defensin alpha 5" evidence="2">
    <location>
        <begin position="20"/>
        <end position="94"/>
    </location>
</feature>
<feature type="peptide" id="PRO_0000417387" description="HD5(23-94)" evidence="2">
    <location>
        <begin position="23"/>
        <end position="94"/>
    </location>
</feature>
<feature type="peptide" id="PRO_0000417388" description="HD5(29-94)" evidence="2">
    <location>
        <begin position="29"/>
        <end position="94"/>
    </location>
</feature>
<feature type="peptide" id="PRO_0000417389" description="HD5(56-94)" evidence="2">
    <location>
        <begin position="56"/>
        <end position="94"/>
    </location>
</feature>
<feature type="peptide" id="PRO_0000417390" description="HD5(63-94)" evidence="2">
    <location>
        <begin position="63"/>
        <end position="94"/>
    </location>
</feature>
<feature type="disulfide bond" evidence="6 7 9 10 12 13 16 21 22 23 24 25 26 27 28 29 30 31 32">
    <location>
        <begin position="65"/>
        <end position="93"/>
    </location>
</feature>
<feature type="disulfide bond" evidence="6 7 9 10 12 13 16 21 22 23 24 25 26 27 28 29 30 31 32">
    <location>
        <begin position="67"/>
        <end position="82"/>
    </location>
</feature>
<feature type="disulfide bond" evidence="6 7 9 10 12 13 16 21 22 23 24 25 26 27 28 29 30 31 32">
    <location>
        <begin position="72"/>
        <end position="92"/>
    </location>
</feature>
<feature type="sequence variant" id="VAR_059245" description="Impairs antimicrobial activity against S.aureus; dbSNP:rs7839771." evidence="7">
    <original>R</original>
    <variation>H</variation>
    <location>
        <position position="71"/>
    </location>
</feature>
<feature type="mutagenesis site" description="Prohibits tetramer formation; when associated with S-93." evidence="10">
    <original>C</original>
    <variation>S</variation>
    <location>
        <position position="67"/>
    </location>
</feature>
<feature type="mutagenesis site" description="Enhanced antibacterial activity against both E.coli and S.aureus. Enhanced membrane binding and membrane disintegration abilities, as well as further increased antibacterial activity; when associated with R-83." evidence="12">
    <original>T</original>
    <variation>R</variation>
    <location>
        <position position="69"/>
    </location>
</feature>
<feature type="mutagenesis site" description="Reduced killing of S.aureus and E.coli. Impairs antimicrobial activity against E.coli, E.aerogenes, S.aureus and B.cereus; when associated with A-90. Reduced induction of IL-8 secretion; when associated with A-90." evidence="7 9">
    <original>R</original>
    <variation>A</variation>
    <location>
        <position position="71"/>
    </location>
</feature>
<feature type="mutagenesis site" description="Impairs antimicrobial activity against S. aureus; when associated with K-90. Reduced induction of IL-8 secretion; when associated with K-90." evidence="7">
    <original>R</original>
    <variation>K</variation>
    <location>
        <position position="71"/>
    </location>
</feature>
<feature type="mutagenesis site" description="Prohibits tetramer formation; when associated with S-92." evidence="10">
    <original>C</original>
    <variation>S</variation>
    <location>
        <position position="72"/>
    </location>
</feature>
<feature type="mutagenesis site" description="Impairs antimicrobial activity against E.coli, E.aerogenes, S.aureus and B.cereus; when associated with A-94. Reduced induction of IL-8 secretion; when associated with A-94." evidence="7">
    <original>R</original>
    <variation>A</variation>
    <location>
        <position position="75"/>
    </location>
</feature>
<feature type="mutagenesis site" description="Does not impair antimicrobial activity against E.coli, E.aerogenes, S.aureus and B.cereus; when associated with K-94. Reduced induction of IL-8 secretion; when associated with K-90." evidence="7">
    <original>R</original>
    <variation>K</variation>
    <location>
        <position position="75"/>
    </location>
</feature>
<feature type="mutagenesis site" description="Increased interaction with B.antracis lef/lethal factor." evidence="9">
    <original>S</original>
    <variation>A</variation>
    <location>
        <position position="77"/>
    </location>
</feature>
<feature type="mutagenesis site" description="Enhanced antibacterial activity against both E.coli and S.aureus. Disrupts homodimerization. Enhanced membrane binding and membrane disintegration abilities, as well further increased antibacterial activity; when associated with R-69." evidence="12">
    <original>E</original>
    <variation>R</variation>
    <location>
        <position position="83"/>
    </location>
</feature>
<feature type="mutagenesis site" description="Enhanced antibacterial activity against both E.coli and S.aureus." evidence="12">
    <original>S</original>
    <variation>R</variation>
    <location>
        <position position="85"/>
    </location>
</feature>
<feature type="mutagenesis site" description="Enhanced antibacterial activity against both E.coli and S.aureus." evidence="12">
    <original>G</original>
    <variation>R</variation>
    <location>
        <position position="86"/>
    </location>
</feature>
<feature type="mutagenesis site" description="Reduced interaction with B.antracis lef/lethal factor. Reduced enhancement of S.flexneri infection." evidence="9 13">
    <original>L</original>
    <variation>A</variation>
    <location>
        <position position="88"/>
    </location>
</feature>
<feature type="mutagenesis site" description="Disrupts homodimer-formation. Reduced interaction with B.antracis lef/lethal factor and reduced killing of S.aureus. Reduced enhancement of S.flexneri infection." evidence="9 13">
    <original>Y</original>
    <variation>A</variation>
    <location>
        <position position="89"/>
    </location>
</feature>
<feature type="mutagenesis site" description="Does not disrupt homodimer-formation. Reduced enhancement of S.flexneri infection. Impairs antimicrobial activity against E.coli, E.aerogenes, S.aureus and B.cereus; when associated with A-71. Reduced induction of IL-8 secretion; when associated with A-71." evidence="7 13">
    <original>R</original>
    <variation>A</variation>
    <location>
        <position position="90"/>
    </location>
</feature>
<feature type="mutagenesis site" description="Impairs antimicrobial activity against S. aureus; when associated with K-71. Reduced induction of IL-8 secretion; when associated with K-71." evidence="7">
    <original>R</original>
    <variation>K</variation>
    <location>
        <position position="90"/>
    </location>
</feature>
<feature type="mutagenesis site" description="Reduced interaction with B.antracis lef/lethal factor and decreased bactericidal activity against E.coli and S.aureus. Reduced enhancement of S.flexneri infection." evidence="9 13">
    <original>L</original>
    <variation>A</variation>
    <location>
        <position position="91"/>
    </location>
</feature>
<feature type="mutagenesis site" description="Prohibits tetramer formation; when associated with S-72." evidence="10">
    <original>C</original>
    <variation>S</variation>
    <location>
        <position position="92"/>
    </location>
</feature>
<feature type="mutagenesis site" description="Prohibits tetramer formation; when associated with S-67." evidence="10">
    <original>C</original>
    <variation>S</variation>
    <location>
        <position position="93"/>
    </location>
</feature>
<feature type="mutagenesis site" description="Impairs antimicrobial activity against E.coli, E.aerogenes, S.aureus and B.cereus; when associated with A-75. Reduced induction of IL-8 secretion; when associated with A-75." evidence="7">
    <original>R</original>
    <variation>A</variation>
    <location>
        <position position="94"/>
    </location>
</feature>
<feature type="mutagenesis site" description="Does not impair antimicrobial activity against E.coli, E.aerogenes, S.aureus and B.cereus; when associated with K-75. Reduced induction of IL-8 secretion; when associated with K-75." evidence="7">
    <original>R</original>
    <variation>K</variation>
    <location>
        <position position="94"/>
    </location>
</feature>
<feature type="strand" evidence="33">
    <location>
        <begin position="65"/>
        <end position="70"/>
    </location>
</feature>
<feature type="strand" evidence="33">
    <location>
        <begin position="76"/>
        <end position="84"/>
    </location>
</feature>
<feature type="strand" evidence="33">
    <location>
        <begin position="87"/>
        <end position="93"/>
    </location>
</feature>
<accession>Q01523</accession>
<accession>A0JDY6</accession>
<accession>Q3KNV2</accession>
<evidence type="ECO:0000255" key="1"/>
<evidence type="ECO:0000269" key="2">
    <source>
    </source>
</evidence>
<evidence type="ECO:0000269" key="3">
    <source>
    </source>
</evidence>
<evidence type="ECO:0000269" key="4">
    <source>
    </source>
</evidence>
<evidence type="ECO:0000269" key="5">
    <source>
    </source>
</evidence>
<evidence type="ECO:0000269" key="6">
    <source>
    </source>
</evidence>
<evidence type="ECO:0000269" key="7">
    <source>
    </source>
</evidence>
<evidence type="ECO:0000269" key="8">
    <source>
    </source>
</evidence>
<evidence type="ECO:0000269" key="9">
    <source>
    </source>
</evidence>
<evidence type="ECO:0000269" key="10">
    <source>
    </source>
</evidence>
<evidence type="ECO:0000269" key="11">
    <source>
    </source>
</evidence>
<evidence type="ECO:0000269" key="12">
    <source>
    </source>
</evidence>
<evidence type="ECO:0000269" key="13">
    <source>
    </source>
</evidence>
<evidence type="ECO:0000269" key="14">
    <source>
    </source>
</evidence>
<evidence type="ECO:0000269" key="15">
    <source>
    </source>
</evidence>
<evidence type="ECO:0000269" key="16">
    <source ref="16"/>
</evidence>
<evidence type="ECO:0000303" key="17">
    <source>
    </source>
</evidence>
<evidence type="ECO:0000303" key="18">
    <source>
    </source>
</evidence>
<evidence type="ECO:0000305" key="19"/>
<evidence type="ECO:0000312" key="20">
    <source>
        <dbReference type="HGNC" id="HGNC:2764"/>
    </source>
</evidence>
<evidence type="ECO:0007744" key="21">
    <source>
        <dbReference type="PDB" id="1ZMP"/>
    </source>
</evidence>
<evidence type="ECO:0007744" key="22">
    <source>
        <dbReference type="PDB" id="2LXZ"/>
    </source>
</evidence>
<evidence type="ECO:0007744" key="23">
    <source>
        <dbReference type="PDB" id="2MIT"/>
    </source>
</evidence>
<evidence type="ECO:0007744" key="24">
    <source>
        <dbReference type="PDB" id="3I5W"/>
    </source>
</evidence>
<evidence type="ECO:0007744" key="25">
    <source>
        <dbReference type="PDB" id="4E82"/>
    </source>
</evidence>
<evidence type="ECO:0007744" key="26">
    <source>
        <dbReference type="PDB" id="4E83"/>
    </source>
</evidence>
<evidence type="ECO:0007744" key="27">
    <source>
        <dbReference type="PDB" id="4E86"/>
    </source>
</evidence>
<evidence type="ECO:0007744" key="28">
    <source>
        <dbReference type="PDB" id="4RBW"/>
    </source>
</evidence>
<evidence type="ECO:0007744" key="29">
    <source>
        <dbReference type="PDB" id="4RBX"/>
    </source>
</evidence>
<evidence type="ECO:0007744" key="30">
    <source>
        <dbReference type="PDB" id="5CUI"/>
    </source>
</evidence>
<evidence type="ECO:0007744" key="31">
    <source>
        <dbReference type="PDB" id="5CUJ"/>
    </source>
</evidence>
<evidence type="ECO:0007744" key="32">
    <source>
        <dbReference type="PDB" id="5CUM"/>
    </source>
</evidence>
<evidence type="ECO:0007829" key="33">
    <source>
        <dbReference type="PDB" id="4RBX"/>
    </source>
</evidence>
<proteinExistence type="evidence at protein level"/>
<organism>
    <name type="scientific">Homo sapiens</name>
    <name type="common">Human</name>
    <dbReference type="NCBI Taxonomy" id="9606"/>
    <lineage>
        <taxon>Eukaryota</taxon>
        <taxon>Metazoa</taxon>
        <taxon>Chordata</taxon>
        <taxon>Craniata</taxon>
        <taxon>Vertebrata</taxon>
        <taxon>Euteleostomi</taxon>
        <taxon>Mammalia</taxon>
        <taxon>Eutheria</taxon>
        <taxon>Euarchontoglires</taxon>
        <taxon>Primates</taxon>
        <taxon>Haplorrhini</taxon>
        <taxon>Catarrhini</taxon>
        <taxon>Hominidae</taxon>
        <taxon>Homo</taxon>
    </lineage>
</organism>
<name>DEF5_HUMAN</name>
<reference key="1">
    <citation type="journal article" date="1992" name="J. Biol. Chem.">
        <title>Paneth cells of the human small intestine express an antimicrobial peptide gene.</title>
        <authorList>
            <person name="Jones D.E."/>
            <person name="Bevins C.L."/>
        </authorList>
    </citation>
    <scope>NUCLEOTIDE SEQUENCE [GENOMIC DNA]</scope>
    <scope>TISSUE SPECIFICITY</scope>
    <source>
        <tissue>Intestine</tissue>
    </source>
</reference>
<reference key="2">
    <citation type="journal article" date="2006" name="Nature">
        <title>DNA sequence and analysis of human chromosome 8.</title>
        <authorList>
            <person name="Nusbaum C."/>
            <person name="Mikkelsen T.S."/>
            <person name="Zody M.C."/>
            <person name="Asakawa S."/>
            <person name="Taudien S."/>
            <person name="Garber M."/>
            <person name="Kodira C.D."/>
            <person name="Schueler M.G."/>
            <person name="Shimizu A."/>
            <person name="Whittaker C.A."/>
            <person name="Chang J.L."/>
            <person name="Cuomo C.A."/>
            <person name="Dewar K."/>
            <person name="FitzGerald M.G."/>
            <person name="Yang X."/>
            <person name="Allen N.R."/>
            <person name="Anderson S."/>
            <person name="Asakawa T."/>
            <person name="Blechschmidt K."/>
            <person name="Bloom T."/>
            <person name="Borowsky M.L."/>
            <person name="Butler J."/>
            <person name="Cook A."/>
            <person name="Corum B."/>
            <person name="DeArellano K."/>
            <person name="DeCaprio D."/>
            <person name="Dooley K.T."/>
            <person name="Dorris L. III"/>
            <person name="Engels R."/>
            <person name="Gloeckner G."/>
            <person name="Hafez N."/>
            <person name="Hagopian D.S."/>
            <person name="Hall J.L."/>
            <person name="Ishikawa S.K."/>
            <person name="Jaffe D.B."/>
            <person name="Kamat A."/>
            <person name="Kudoh J."/>
            <person name="Lehmann R."/>
            <person name="Lokitsang T."/>
            <person name="Macdonald P."/>
            <person name="Major J.E."/>
            <person name="Matthews C.D."/>
            <person name="Mauceli E."/>
            <person name="Menzel U."/>
            <person name="Mihalev A.H."/>
            <person name="Minoshima S."/>
            <person name="Murayama Y."/>
            <person name="Naylor J.W."/>
            <person name="Nicol R."/>
            <person name="Nguyen C."/>
            <person name="O'Leary S.B."/>
            <person name="O'Neill K."/>
            <person name="Parker S.C.J."/>
            <person name="Polley A."/>
            <person name="Raymond C.K."/>
            <person name="Reichwald K."/>
            <person name="Rodriguez J."/>
            <person name="Sasaki T."/>
            <person name="Schilhabel M."/>
            <person name="Siddiqui R."/>
            <person name="Smith C.L."/>
            <person name="Sneddon T.P."/>
            <person name="Talamas J.A."/>
            <person name="Tenzin P."/>
            <person name="Topham K."/>
            <person name="Venkataraman V."/>
            <person name="Wen G."/>
            <person name="Yamazaki S."/>
            <person name="Young S.K."/>
            <person name="Zeng Q."/>
            <person name="Zimmer A.R."/>
            <person name="Rosenthal A."/>
            <person name="Birren B.W."/>
            <person name="Platzer M."/>
            <person name="Shimizu N."/>
            <person name="Lander E.S."/>
        </authorList>
    </citation>
    <scope>NUCLEOTIDE SEQUENCE [LARGE SCALE GENOMIC DNA]</scope>
</reference>
<reference key="3">
    <citation type="submission" date="2005-07" db="EMBL/GenBank/DDBJ databases">
        <authorList>
            <person name="Mural R.J."/>
            <person name="Istrail S."/>
            <person name="Sutton G.G."/>
            <person name="Florea L."/>
            <person name="Halpern A.L."/>
            <person name="Mobarry C.M."/>
            <person name="Lippert R."/>
            <person name="Walenz B."/>
            <person name="Shatkay H."/>
            <person name="Dew I."/>
            <person name="Miller J.R."/>
            <person name="Flanigan M.J."/>
            <person name="Edwards N.J."/>
            <person name="Bolanos R."/>
            <person name="Fasulo D."/>
            <person name="Halldorsson B.V."/>
            <person name="Hannenhalli S."/>
            <person name="Turner R."/>
            <person name="Yooseph S."/>
            <person name="Lu F."/>
            <person name="Nusskern D.R."/>
            <person name="Shue B.C."/>
            <person name="Zheng X.H."/>
            <person name="Zhong F."/>
            <person name="Delcher A.L."/>
            <person name="Huson D.H."/>
            <person name="Kravitz S.A."/>
            <person name="Mouchard L."/>
            <person name="Reinert K."/>
            <person name="Remington K.A."/>
            <person name="Clark A.G."/>
            <person name="Waterman M.S."/>
            <person name="Eichler E.E."/>
            <person name="Adams M.D."/>
            <person name="Hunkapiller M.W."/>
            <person name="Myers E.W."/>
            <person name="Venter J.C."/>
        </authorList>
    </citation>
    <scope>NUCLEOTIDE SEQUENCE [LARGE SCALE GENOMIC DNA]</scope>
</reference>
<reference key="4">
    <citation type="journal article" date="2004" name="Genome Res.">
        <title>The status, quality, and expansion of the NIH full-length cDNA project: the Mammalian Gene Collection (MGC).</title>
        <authorList>
            <consortium name="The MGC Project Team"/>
        </authorList>
    </citation>
    <scope>NUCLEOTIDE SEQUENCE [LARGE SCALE MRNA]</scope>
</reference>
<reference key="5">
    <citation type="journal article" date="2002" name="Nat. Immunol.">
        <title>Paneth cell trypsin is the processing enzyme for human defensin-5.</title>
        <authorList>
            <person name="Ghosh D."/>
            <person name="Porter E."/>
            <person name="Shen B."/>
            <person name="Lee S.K."/>
            <person name="Wilk D."/>
            <person name="Drazba J."/>
            <person name="Yadav S.P."/>
            <person name="Crabb J.W."/>
            <person name="Ganz T."/>
            <person name="Bevins C.L."/>
        </authorList>
    </citation>
    <scope>PARTIAL PROTEIN SEQUENCE</scope>
    <scope>FUNCTION</scope>
    <scope>PEPTIDE CHARACTERIZATION</scope>
    <scope>PROTEOLYTIC CLEAVAGE</scope>
    <scope>GLYCOSYLATION</scope>
    <scope>SUBCELLULAR LOCATION</scope>
    <scope>TISSUE SPECIFICITY</scope>
</reference>
<reference key="6">
    <citation type="journal article" date="1998" name="Am. J. Pathol.">
        <title>Gene expression, immunolocalization, and secretion of human defensin-5 in human female reproductive tract.</title>
        <authorList>
            <person name="Quayle A.J."/>
            <person name="Porter E.M."/>
            <person name="Nussbaum A.A."/>
            <person name="Wang Y.M."/>
            <person name="Brabec C."/>
            <person name="Yip K.P."/>
            <person name="Mok S.C."/>
        </authorList>
    </citation>
    <scope>SUBCELLULAR LOCATION</scope>
    <scope>TISSUE SPECIFICITY</scope>
    <scope>INDUCTION BY INFECTION</scope>
</reference>
<reference key="7">
    <citation type="journal article" date="2003" name="Nature">
        <title>Protection against enteric salmonellosis in transgenic mice expressing a human intestinal defensin.</title>
        <authorList>
            <person name="Salzman N.H."/>
            <person name="Ghosh D."/>
            <person name="Huttner K.M."/>
            <person name="Paterson Y."/>
            <person name="Bevins C.L."/>
        </authorList>
    </citation>
    <scope>FUNCTION</scope>
</reference>
<reference key="8">
    <citation type="journal article" date="2005" name="Antimicrob. Agents Chemother.">
        <title>Antibacterial activity and specificity of the six human alpha-defensins.</title>
        <authorList>
            <person name="Ericksen B."/>
            <person name="Wu Z."/>
            <person name="Lu W."/>
            <person name="Lehrer R.I."/>
        </authorList>
    </citation>
    <scope>FUNCTION</scope>
</reference>
<reference key="9">
    <citation type="journal article" date="2012" name="PLoS ONE">
        <title>Human alpha defensin 5 expression in the human kidney and urinary tract.</title>
        <authorList>
            <person name="Spencer J.D."/>
            <person name="Hains D.S."/>
            <person name="Porter E."/>
            <person name="Bevins C.L."/>
            <person name="DiRosario J."/>
            <person name="Becknell B."/>
            <person name="Wang H."/>
            <person name="Schwaderer A.L."/>
        </authorList>
    </citation>
    <scope>FUNCTION</scope>
    <scope>TISSUE SPECIFICITY</scope>
    <scope>INDUCTION BY PYELONEPHRITIS</scope>
</reference>
<reference key="10">
    <citation type="journal article" date="2015" name="Mucosal Immunol.">
        <title>Paneth cell alpha-defensin 6 (HD-6) is an antimicrobial peptide.</title>
        <authorList>
            <person name="Schroeder B.O."/>
            <person name="Ehmann D."/>
            <person name="Precht J.C."/>
            <person name="Castillo P.A."/>
            <person name="Kuechler R."/>
            <person name="Berger J."/>
            <person name="Schaller M."/>
            <person name="Stange E.F."/>
            <person name="Wehkamp J."/>
        </authorList>
    </citation>
    <scope>FUNCTION</scope>
</reference>
<reference key="11">
    <citation type="journal article" date="2019" name="Proc. Natl. Acad. Sci. U.S.A.">
        <title>Paneth cell alpha-defensins HD-5 and HD-6 display differential degradation into active antimicrobial fragments.</title>
        <authorList>
            <person name="Ehmann D."/>
            <person name="Wendler J."/>
            <person name="Koeninger L."/>
            <person name="Larsen I.S."/>
            <person name="Klag T."/>
            <person name="Berger J."/>
            <person name="Marette A."/>
            <person name="Schaller M."/>
            <person name="Stange E.F."/>
            <person name="Malek N.P."/>
            <person name="Jensen B.A.H."/>
            <person name="Wehkamp J."/>
        </authorList>
    </citation>
    <scope>FUNCTION</scope>
    <scope>PROTEOLYTIC CLEAVAGE</scope>
</reference>
<reference evidence="21" key="12">
    <citation type="journal article" date="2006" name="Protein Sci.">
        <title>Crystal structures of human alpha-defensins HNP4, HD5, and HD6.</title>
        <authorList>
            <person name="Szyk A."/>
            <person name="Wu Z."/>
            <person name="Tucker K."/>
            <person name="Yang D."/>
            <person name="Lu W."/>
            <person name="Lubkowski J."/>
        </authorList>
    </citation>
    <scope>X-RAY CRYSTALLOGRAPHY (1.65 ANGSTROMS) OF 63-94</scope>
    <scope>FUNCTION</scope>
    <scope>SUBUNIT</scope>
    <scope>DISULFIDE BONDS</scope>
</reference>
<reference evidence="24" key="13">
    <citation type="journal article" date="2009" name="FEBS Lett.">
        <title>Selective arginines are important for the antibacterial activity and host cell interaction of human alpha-defensin 5.</title>
        <authorList>
            <person name="de Leeuw E."/>
            <person name="Rajabi M."/>
            <person name="Zou G."/>
            <person name="Pazgier M."/>
            <person name="Lu W."/>
        </authorList>
    </citation>
    <scope>X-RAY CRYSTALLOGRAPHY (1.63 ANGSTROMS) OF 63-94 OF MUTANT HIS-71</scope>
    <scope>FUNCTION</scope>
    <scope>DISULFIDE BONDS</scope>
    <scope>VARIANT HIS-71</scope>
    <scope>MUTAGENESIS OF ARG-71; ARG-75; ARG-90 AND ARG-94</scope>
</reference>
<reference evidence="22" key="14">
    <citation type="journal article" date="2012" name="Biochemistry">
        <title>NMR solution structure and condition-dependent oligomerization of the antimicrobial peptide human defensin 5.</title>
        <authorList>
            <person name="Wommack A.J."/>
            <person name="Robson S.A."/>
            <person name="Wanniarachchi Y.A."/>
            <person name="Wan A."/>
            <person name="Turner C.J."/>
            <person name="Wagner G."/>
            <person name="Nolan E.M."/>
        </authorList>
    </citation>
    <scope>STRUCTURE BY NMR OF 63-94</scope>
    <scope>SUBUNIT</scope>
    <scope>DISULFIDE BONDS</scope>
    <scope>MUTAGENESIS OF CYS-67; CYS-72; CYS-92 AND CYS-93</scope>
</reference>
<reference evidence="25 26 27" key="15">
    <citation type="journal article" date="2012" name="J. Biol. Chem.">
        <title>Functional determinants of human enteric alpha-defensin HD5: crucial role for hydrophobicity at dimer interface.</title>
        <authorList>
            <person name="Rajabi M."/>
            <person name="Ericksen B."/>
            <person name="Wu X."/>
            <person name="de Leeuw E."/>
            <person name="Zhao L."/>
            <person name="Pazgier M."/>
            <person name="Lu W."/>
        </authorList>
    </citation>
    <scope>X-RAY CRYSTALLOGRAPHY (1.70 ANGSTROMS) OF 63-94</scope>
    <scope>FUNCTION</scope>
    <scope>SUBUNIT</scope>
    <scope>INTERACTION WITH B.ANTRACIS LEF/LETHAL FACTOR</scope>
    <scope>DISULFIDE BONDS</scope>
    <scope>MUTAGENESIS OF ARG-71; SER-77; LEU-88; TYR-89 AND LEU-91</scope>
</reference>
<reference evidence="23" key="16">
    <citation type="submission" date="2013-12" db="PDB data bank">
        <title>Solution structure of oxidized dimeric form of human defensin 5.</title>
        <authorList>
            <person name="Wommack A.J."/>
            <person name="Ziarek J.J."/>
            <person name="Wagner G."/>
            <person name="Nolan E.M."/>
        </authorList>
    </citation>
    <scope>STRUCTURE BY NMR OF 63-94</scope>
    <scope>DISULFIDE BONDS</scope>
</reference>
<reference evidence="28 29" key="17">
    <citation type="journal article" date="2015" name="J. Med. Chem.">
        <title>Design of a potent antibiotic peptide based on the active region of human defensin 5.</title>
        <authorList>
            <person name="Wang C."/>
            <person name="Shen M."/>
            <person name="Gohain N."/>
            <person name="Tolbert W.D."/>
            <person name="Chen F."/>
            <person name="Zhang N."/>
            <person name="Yang K."/>
            <person name="Wang A."/>
            <person name="Su Y."/>
            <person name="Cheng T."/>
            <person name="Zhao J."/>
            <person name="Pazgier M."/>
            <person name="Wang J."/>
        </authorList>
    </citation>
    <scope>X-RAY CRYSTALLOGRAPHY (1.10 ANGSTROMS) OF 63-94 OF MUTANT ARG-7 AND ARG-83</scope>
    <scope>FUNCTION</scope>
    <scope>SUBUNIT</scope>
    <scope>DISULFIDE BONDS</scope>
    <scope>MUTAGENESIS OF THR-69; GLU-83; SER-85 AND GLY-86</scope>
</reference>
<reference evidence="30 31 32" key="18">
    <citation type="journal article" date="2018" name="Immunity">
        <title>Human Enteric alpha-Defensin 5 Promotes Shigella Infection by Enhancing Bacterial Adhesion and Invasion.</title>
        <authorList>
            <person name="Xu D."/>
            <person name="Liao C."/>
            <person name="Zhang B."/>
            <person name="Tolbert W.D."/>
            <person name="He W."/>
            <person name="Dai Z."/>
            <person name="Zhang W."/>
            <person name="Yuan W."/>
            <person name="Pazgier M."/>
            <person name="Liu J."/>
            <person name="Yu J."/>
            <person name="Sansonetti P.J."/>
            <person name="Bevins C.L."/>
            <person name="Shao Y."/>
            <person name="Lu W."/>
        </authorList>
    </citation>
    <scope>X-RAY CRYSTALLOGRAPHY (1.75 ANGSTROMS) OF 63-94 OF MUTANT ALA-89 AND ALA-90</scope>
    <scope>FUNCTION (MICROBIAL INFECTION)</scope>
    <scope>SUBUNIT</scope>
    <scope>DISULFIDE BONDS</scope>
    <scope>MUTAGENESIS OF LEU-88; TYR-89; ARG-90 AND LEU-91</scope>
</reference>
<comment type="function">
    <text evidence="2 3 5 7 8 9 11 12 14">Host-defense peptide that maintains sterility in the urogenital system (PubMed:12021776, PubMed:12660734, PubMed:15616305, PubMed:19589339, PubMed:22359618, PubMed:22573326, PubMed:25354318, PubMed:25782105, PubMed:30808760). Has antimicrobial activity against a wide range of bacteria, including Gram-negative E.coli, P.aeruginosa and S.typhimurium, and Gram-positive E.aerogenes, S.aureus, B.cereus, E.faecium and L.monocytogenes (PubMed:12021776, PubMed:15616305, PubMed:19589339, PubMed:22359618, PubMed:22573326, PubMed:25354318, PubMed:30808760). Confers resistance to intestinal infection by S.typhimurium (PubMed:12660734). Exhibits antimicrobial activity against enteric commensal bacteria such as B.adolescentis, L.acidophilus, B.breve, L.fermentum, B.longum and S.thermophilus (PubMed:25354318). Binds to bacterial membranes and causes membrane disintegration (PubMed:25782105). Induces the secretion of the chemokine IL-8 by intestinal epithelial cells (PubMed:19589339). Binds to B.antracis lef/lethal factor, a major virulence factor from B.anthracis, and neutralizes its enzymatic activity (PubMed:22573326).</text>
</comment>
<comment type="function">
    <text evidence="13">(Microbial infection) Acts as a target for S.flexneri infection by binding to the bacterium, possibly via bacterial surface proteins, and thereby augmenting infectivity via enhanced bacterial adhesion and invasion of epithelial cells and tissues.</text>
</comment>
<comment type="subunit">
    <text evidence="6 9 10 12 13">Homodimer (PubMed:17088326, PubMed:22573326, PubMed:25782105, PubMed:29858013). Homotetramer (PubMed:23163963). Interacts with B.antracis lef/lethal factor (PubMed:22573326).</text>
</comment>
<comment type="interaction">
    <interactant intactId="EBI-3908179">
        <id>Q01523</id>
    </interactant>
    <interactant intactId="EBI-16439278">
        <id>Q6FHY5</id>
        <label>MEOX2</label>
    </interactant>
    <organismsDiffer>false</organismsDiffer>
    <experiments>3</experiments>
</comment>
<comment type="interaction">
    <interactant intactId="EBI-25634589">
        <id>PRO_0000417390</id>
    </interactant>
    <interactant intactId="EBI-7730807">
        <id>Q9BYF1</id>
        <label>ACE2</label>
    </interactant>
    <organismsDiffer>false</organismsDiffer>
    <experiments>2</experiments>
</comment>
<comment type="subcellular location">
    <subcellularLocation>
        <location evidence="2 15">Secreted</location>
    </subcellularLocation>
    <subcellularLocation>
        <location evidence="2 15">Cytoplasmic vesicle</location>
        <location evidence="2 15">Secretory vesicle</location>
    </subcellularLocation>
    <text evidence="2 15">Stored as propeptide HD5(20-94) in secretory granules of small intestinal Paneth cells and found in the ileum lumen as processed mature peptides, predominantly in the HD5(63-94) form (PubMed:12021776). Peptides HD5(20-94), HD5(23-94) and HD5(29-94) are found within tissues, HD5(20-94) being the predominant intracellular form. Peptides HD5(56-94) and HD5(63-94) are found in the extracellular milieu, HD5(63-94) being the most abundant form (PubMed:12021776). Secreted into the female genital tract lumen (PubMed:9588893).</text>
</comment>
<comment type="tissue specificity">
    <text evidence="2 4 8 15">Expressed in the gastrointestinal, reproductive, and urinary tracts (at protein level) (PubMed:12021776, PubMed:1429669, PubMed:22359618, PubMed:9588893). Expressed in Paneth cells of the small intestine (at protein level) (PubMed:12021776, PubMed:1429669). Expressed throughout the urothelium of the lower urinary tract and in the collecting tubules of the kidney (at protein level) (PubMed:22359618). Expressed in stratified squamous epithelial cells of the female genital tract epithelia, such as in vagina, ectocervix, endocervix, endometrium, and fallopian tube (at protein level) (PubMed:9588893). Endometrial expression correlates with stages of the menstrual cycle: Expression is low during the early proliferative phase, increased during the mid- to late proliferative phase, peaks during the early secretory phase of the cycle, and decreases during the mid- to late secretory phase (PubMed:9588893).</text>
</comment>
<comment type="induction">
    <text evidence="8 15">Up-regulated in fallopian tubes upon infection (PubMed:9588893). Increased expression in kidneys with pyelonephritis (PubMed:22359618).</text>
</comment>
<comment type="PTM">
    <text evidence="2">Glycosylated.</text>
</comment>
<comment type="PTM">
    <text evidence="2 14">Proteolytically cleaved at Arg-62 by trypsin (PubMed:12021776). Both the propeptide form proHD5/HD5(20-94) and HD5(56-94) are cleaved into the lumenal peptide form HD5(63-94) by trypsin (PubMed:12021776). Unprocessed proHD5 exerts antimicrobial activities, but peptide potency is enhanced by peptide processing (PubMed:12021776). Proteolytically cleaved in duodenal fluid; derived fragments are antimicrobially active against commensal bacteria (in vitro) (PubMed:30808760).</text>
</comment>
<comment type="PTM">
    <text evidence="13">(Microbial infection) The disulfide bridges and homodimerization are a prerequisite for the enhancement of S.flexneri adhesion and invasion.</text>
</comment>
<comment type="similarity">
    <text evidence="19">Belongs to the alpha-defensin family.</text>
</comment>
<comment type="caution">
    <text evidence="6 9 12">It was shown by two studies that dimerization of DEFA5 is crucial for antimicrobial activity (PubMed:17088326, PubMed:22573326). Another study, however, states that dimer formation is not indispensable for antimicrobial activity of DEFA5 (PubMed:25782105).</text>
</comment>